<dbReference type="EMBL" id="DQ117903">
    <property type="protein sequence ID" value="AAZ30393.1"/>
    <property type="molecule type" value="mRNA"/>
</dbReference>
<dbReference type="SMR" id="P0DKD2"/>
<dbReference type="GO" id="GO:0005938">
    <property type="term" value="C:cell cortex"/>
    <property type="evidence" value="ECO:0007669"/>
    <property type="project" value="TreeGrafter"/>
</dbReference>
<dbReference type="GO" id="GO:0005856">
    <property type="term" value="C:cytoskeleton"/>
    <property type="evidence" value="ECO:0007669"/>
    <property type="project" value="UniProtKB-SubCell"/>
</dbReference>
<dbReference type="GO" id="GO:0003785">
    <property type="term" value="F:actin monomer binding"/>
    <property type="evidence" value="ECO:0007669"/>
    <property type="project" value="TreeGrafter"/>
</dbReference>
<dbReference type="CDD" id="cd00148">
    <property type="entry name" value="PROF"/>
    <property type="match status" value="1"/>
</dbReference>
<dbReference type="FunFam" id="3.30.450.30:FF:000001">
    <property type="entry name" value="Profilin"/>
    <property type="match status" value="1"/>
</dbReference>
<dbReference type="Gene3D" id="3.30.450.30">
    <property type="entry name" value="Dynein light chain 2a, cytoplasmic"/>
    <property type="match status" value="1"/>
</dbReference>
<dbReference type="InterPro" id="IPR048278">
    <property type="entry name" value="PFN"/>
</dbReference>
<dbReference type="InterPro" id="IPR005455">
    <property type="entry name" value="PFN_euk"/>
</dbReference>
<dbReference type="InterPro" id="IPR036140">
    <property type="entry name" value="PFN_sf"/>
</dbReference>
<dbReference type="InterPro" id="IPR027310">
    <property type="entry name" value="Profilin_CS"/>
</dbReference>
<dbReference type="PANTHER" id="PTHR11604">
    <property type="entry name" value="PROFILIN"/>
    <property type="match status" value="1"/>
</dbReference>
<dbReference type="PANTHER" id="PTHR11604:SF25">
    <property type="entry name" value="PROFILIN-5"/>
    <property type="match status" value="1"/>
</dbReference>
<dbReference type="Pfam" id="PF00235">
    <property type="entry name" value="Profilin"/>
    <property type="match status" value="1"/>
</dbReference>
<dbReference type="PRINTS" id="PR00392">
    <property type="entry name" value="PROFILIN"/>
</dbReference>
<dbReference type="PRINTS" id="PR01640">
    <property type="entry name" value="PROFILINPLNT"/>
</dbReference>
<dbReference type="SMART" id="SM00392">
    <property type="entry name" value="PROF"/>
    <property type="match status" value="1"/>
</dbReference>
<dbReference type="SUPFAM" id="SSF55770">
    <property type="entry name" value="Profilin (actin-binding protein)"/>
    <property type="match status" value="1"/>
</dbReference>
<dbReference type="PROSITE" id="PS00414">
    <property type="entry name" value="PROFILIN"/>
    <property type="match status" value="1"/>
</dbReference>
<name>PROFH_OLEEU</name>
<accession>P0DKD2</accession>
<accession>A4GCR3</accession>
<reference key="1">
    <citation type="journal article" date="2012" name="PLoS ONE">
        <title>Characterization of profilin polymorphism in pollen with a focus on multifunctionality.</title>
        <authorList>
            <person name="Jimenez-Lopez J.C."/>
            <person name="Morales S."/>
            <person name="Castro A.J."/>
            <person name="Volkmann D."/>
            <person name="Rodriguez-Garcia M.I."/>
            <person name="Alche Jde D."/>
        </authorList>
    </citation>
    <scope>NUCLEOTIDE SEQUENCE [MRNA]</scope>
    <scope>POLYMORPHISM</scope>
    <source>
        <strain>cv. Verdial de Huevar</strain>
        <tissue>Pollen</tissue>
    </source>
</reference>
<reference key="2">
    <citation type="journal article" date="2013" name="PLoS ONE">
        <title>Analysis of the effects of polymorphism on pollen profilin structural functionality and the generation of conformational, T- and B-cell epitopes.</title>
        <authorList>
            <person name="Jimenez-Lopez J.C."/>
            <person name="Rodriguez-Garcia M.I."/>
            <person name="Alche J.D."/>
        </authorList>
    </citation>
    <scope>3D-STRUCTURE MODELING</scope>
    <scope>DISULFIDE BOND</scope>
</reference>
<evidence type="ECO:0000250" key="1"/>
<evidence type="ECO:0000305" key="2"/>
<evidence type="ECO:0000305" key="3">
    <source>
    </source>
</evidence>
<keyword id="KW-0009">Actin-binding</keyword>
<keyword id="KW-0020">Allergen</keyword>
<keyword id="KW-0963">Cytoplasm</keyword>
<keyword id="KW-0206">Cytoskeleton</keyword>
<keyword id="KW-1015">Disulfide bond</keyword>
<keyword id="KW-0597">Phosphoprotein</keyword>
<protein>
    <recommendedName>
        <fullName>Profilin-1</fullName>
    </recommendedName>
    <alternativeName>
        <fullName>Pollen allergen Ole e 2</fullName>
    </alternativeName>
    <allergenName>Ole e 2</allergenName>
</protein>
<feature type="initiator methionine" description="Removed" evidence="1">
    <location>
        <position position="1"/>
    </location>
</feature>
<feature type="chain" id="PRO_0000424973" description="Profilin-1">
    <location>
        <begin position="2"/>
        <end position="134"/>
    </location>
</feature>
<feature type="short sequence motif" description="Involved in PIP2 interaction">
    <location>
        <begin position="84"/>
        <end position="100"/>
    </location>
</feature>
<feature type="modified residue" description="Phosphothreonine" evidence="1">
    <location>
        <position position="114"/>
    </location>
</feature>
<feature type="disulfide bond" evidence="3">
    <location>
        <begin position="13"/>
        <end position="118"/>
    </location>
</feature>
<sequence>MSWQAYVDDHLMCDIEGHEGHRLTAAAIVGHDGSVWAQSATFPQFKPEEMNGIMTDFNEPGHLAPTGLHLGGTKYMVIQGEAGAVIRGKKGSGGITIKKTGQALVFGIYEEPVTPGQCNMVVERLGDYLLEQGL</sequence>
<proteinExistence type="evidence at protein level"/>
<comment type="function">
    <text evidence="1">Binds to actin and affects the structure of the cytoskeleton. At high concentrations, profilin prevents the polymerization of actin, whereas it enhances it at low concentrations (By similarity).</text>
</comment>
<comment type="subunit">
    <text evidence="1">Occurs in many kinds of cells as a complex with monomeric actin in a 1:1 ratio.</text>
</comment>
<comment type="subcellular location">
    <subcellularLocation>
        <location evidence="1">Cytoplasm</location>
        <location evidence="1">Cytoskeleton</location>
    </subcellularLocation>
</comment>
<comment type="PTM">
    <text evidence="1">Phosphorylated by MAP kinases.</text>
</comment>
<comment type="polymorphism">
    <text>Several isoforms of the allergen exist due to polymorphism.</text>
</comment>
<comment type="allergen">
    <text>Causes an allergic reaction in human.</text>
</comment>
<comment type="miscellaneous">
    <text evidence="3">The variability of the residues taking part of IgE-binding epitopes might be responsible of the difference in cross-reactivity among olive pollen cultivars, and between distantly related pollen species, leading to a variable range of allergy reactions among atopic patients.</text>
</comment>
<comment type="similarity">
    <text evidence="2">Belongs to the profilin family.</text>
</comment>
<organism>
    <name type="scientific">Olea europaea</name>
    <name type="common">Common olive</name>
    <dbReference type="NCBI Taxonomy" id="4146"/>
    <lineage>
        <taxon>Eukaryota</taxon>
        <taxon>Viridiplantae</taxon>
        <taxon>Streptophyta</taxon>
        <taxon>Embryophyta</taxon>
        <taxon>Tracheophyta</taxon>
        <taxon>Spermatophyta</taxon>
        <taxon>Magnoliopsida</taxon>
        <taxon>eudicotyledons</taxon>
        <taxon>Gunneridae</taxon>
        <taxon>Pentapetalae</taxon>
        <taxon>asterids</taxon>
        <taxon>lamiids</taxon>
        <taxon>Lamiales</taxon>
        <taxon>Oleaceae</taxon>
        <taxon>Oleeae</taxon>
        <taxon>Olea</taxon>
    </lineage>
</organism>